<feature type="initiator methionine" description="Removed" evidence="1">
    <location>
        <position position="1"/>
    </location>
</feature>
<feature type="chain" id="PRO_0000149140" description="Large ribosomal subunit protein eL42">
    <location>
        <begin position="2"/>
        <end position="106"/>
    </location>
</feature>
<evidence type="ECO:0000250" key="1"/>
<evidence type="ECO:0000305" key="2"/>
<organism>
    <name type="scientific">Kluyveromyces marxianus</name>
    <name type="common">Yeast</name>
    <name type="synonym">Candida kefyr</name>
    <dbReference type="NCBI Taxonomy" id="4911"/>
    <lineage>
        <taxon>Eukaryota</taxon>
        <taxon>Fungi</taxon>
        <taxon>Dikarya</taxon>
        <taxon>Ascomycota</taxon>
        <taxon>Saccharomycotina</taxon>
        <taxon>Saccharomycetes</taxon>
        <taxon>Saccharomycetales</taxon>
        <taxon>Saccharomycetaceae</taxon>
        <taxon>Kluyveromyces</taxon>
    </lineage>
</organism>
<dbReference type="EMBL" id="D10580">
    <property type="protein sequence ID" value="BAA01437.1"/>
    <property type="molecule type" value="Genomic_DNA"/>
</dbReference>
<dbReference type="PIR" id="E43301">
    <property type="entry name" value="E43301"/>
</dbReference>
<dbReference type="SMR" id="P27076"/>
<dbReference type="VEuPathDB" id="FungiDB:KLMA_20762"/>
<dbReference type="GO" id="GO:1990904">
    <property type="term" value="C:ribonucleoprotein complex"/>
    <property type="evidence" value="ECO:0007669"/>
    <property type="project" value="UniProtKB-KW"/>
</dbReference>
<dbReference type="GO" id="GO:0005840">
    <property type="term" value="C:ribosome"/>
    <property type="evidence" value="ECO:0007669"/>
    <property type="project" value="UniProtKB-KW"/>
</dbReference>
<dbReference type="GO" id="GO:0003735">
    <property type="term" value="F:structural constituent of ribosome"/>
    <property type="evidence" value="ECO:0007669"/>
    <property type="project" value="InterPro"/>
</dbReference>
<dbReference type="GO" id="GO:0046677">
    <property type="term" value="P:response to antibiotic"/>
    <property type="evidence" value="ECO:0007669"/>
    <property type="project" value="UniProtKB-KW"/>
</dbReference>
<dbReference type="GO" id="GO:0046898">
    <property type="term" value="P:response to cycloheximide"/>
    <property type="evidence" value="ECO:0007669"/>
    <property type="project" value="UniProtKB-KW"/>
</dbReference>
<dbReference type="GO" id="GO:0006412">
    <property type="term" value="P:translation"/>
    <property type="evidence" value="ECO:0007669"/>
    <property type="project" value="InterPro"/>
</dbReference>
<dbReference type="FunFam" id="3.10.450.80:FF:000001">
    <property type="entry name" value="60S ribosomal protein L44"/>
    <property type="match status" value="1"/>
</dbReference>
<dbReference type="Gene3D" id="3.10.450.80">
    <property type="match status" value="1"/>
</dbReference>
<dbReference type="InterPro" id="IPR000552">
    <property type="entry name" value="Ribosomal_eL44"/>
</dbReference>
<dbReference type="InterPro" id="IPR053708">
    <property type="entry name" value="Ribosomal_LSU_eL42"/>
</dbReference>
<dbReference type="InterPro" id="IPR011332">
    <property type="entry name" value="Ribosomal_zn-bd"/>
</dbReference>
<dbReference type="PANTHER" id="PTHR10369">
    <property type="entry name" value="60S RIBOSOMAL PROTEIN L36A/L44"/>
    <property type="match status" value="1"/>
</dbReference>
<dbReference type="Pfam" id="PF00935">
    <property type="entry name" value="Ribosomal_L44"/>
    <property type="match status" value="1"/>
</dbReference>
<dbReference type="SUPFAM" id="SSF57829">
    <property type="entry name" value="Zn-binding ribosomal proteins"/>
    <property type="match status" value="1"/>
</dbReference>
<dbReference type="PROSITE" id="PS01172">
    <property type="entry name" value="RIBOSOMAL_L44E"/>
    <property type="match status" value="1"/>
</dbReference>
<protein>
    <recommendedName>
        <fullName evidence="2">Large ribosomal subunit protein eL42</fullName>
    </recommendedName>
    <alternativeName>
        <fullName>60S ribosomal protein L41</fullName>
    </alternativeName>
    <alternativeName>
        <fullName>60S ribosomal protein L44</fullName>
    </alternativeName>
</protein>
<comment type="miscellaneous">
    <text>Confers resistance to cycloheximide, an inhibitor of polypeptide elongation.</text>
</comment>
<comment type="similarity">
    <text evidence="2">Belongs to the eukaryotic ribosomal protein eL42 family.</text>
</comment>
<name>RL44_KLUMA</name>
<proteinExistence type="inferred from homology"/>
<reference key="1">
    <citation type="journal article" date="1992" name="J. Bacteriol.">
        <title>Drastic alteration of cycloheximide sensitivity by substitution of one amino acid in the L41 ribosomal protein of yeasts.</title>
        <authorList>
            <person name="Kawai S."/>
            <person name="Murao S."/>
            <person name="Mochizuki M."/>
            <person name="Shibuya I."/>
            <person name="Yano K."/>
            <person name="Takagi M."/>
        </authorList>
    </citation>
    <scope>NUCLEOTIDE SEQUENCE [GENOMIC DNA]</scope>
</reference>
<sequence length="106" mass="12191">MVNVPKTRKTYCKGKACRKHSQHKVTQYKAGKASLYAQGKRRYDRKQSGFGGQTKQIFHKKAKTTKKVVLRLECMSCKTKTQLALKRCKHFELGGEKKQKGQALQF</sequence>
<accession>P27076</accession>
<gene>
    <name type="primary">RPL44</name>
    <name type="synonym">RPL41</name>
</gene>
<keyword id="KW-0046">Antibiotic resistance</keyword>
<keyword id="KW-0196">Cycloheximide resistance</keyword>
<keyword id="KW-0687">Ribonucleoprotein</keyword>
<keyword id="KW-0689">Ribosomal protein</keyword>